<comment type="function">
    <text>Nitrate reductase is a key enzyme involved in the first step of nitrate assimilation in plants, fungi and bacteria.</text>
</comment>
<comment type="cofactor">
    <cofactor evidence="3">
        <name>[4Fe-4S] cluster</name>
        <dbReference type="ChEBI" id="CHEBI:49883"/>
    </cofactor>
    <text evidence="3">Binds 1 [4Fe-4S] cluster.</text>
</comment>
<comment type="cofactor">
    <cofactor evidence="1">
        <name>Mo-bis(molybdopterin guanine dinucleotide)</name>
        <dbReference type="ChEBI" id="CHEBI:60539"/>
    </cofactor>
    <text evidence="1">Binds 1 molybdenum-bis(molybdopterin guanine dinucleotide) (Mo-bis-MGD) cofactor per subunit.</text>
</comment>
<comment type="pathway">
    <text>Nitrogen metabolism; nitrate reduction (denitrification); dinitrogen from nitrate: step 1/4.</text>
</comment>
<comment type="induction">
    <text>By nitrate or nitrite during nitrogen-limited growth.</text>
</comment>
<comment type="similarity">
    <text evidence="3">Belongs to the prokaryotic molybdopterin-containing oxidoreductase family. NasA/NapA/NarB subfamily.</text>
</comment>
<gene>
    <name type="primary">nasA</name>
</gene>
<reference key="1">
    <citation type="journal article" date="1993" name="J. Bacteriol.">
        <title>Structures of genes nasA and nasB, encoding assimilatory nitrate and nitrite reductases in Klebsiella pneumoniae M5al.</title>
        <authorList>
            <person name="Lin J.T."/>
            <person name="Goldman B.S."/>
            <person name="Stewart V."/>
        </authorList>
    </citation>
    <scope>NUCLEOTIDE SEQUENCE [GENOMIC DNA]</scope>
    <source>
        <strain>M5a1</strain>
    </source>
</reference>
<reference key="2">
    <citation type="submission" date="1999-05" db="EMBL/GenBank/DDBJ databases">
        <authorList>
            <person name="Stewart V."/>
        </authorList>
    </citation>
    <scope>SEQUENCE REVISION</scope>
</reference>
<keyword id="KW-0004">4Fe-4S</keyword>
<keyword id="KW-0408">Iron</keyword>
<keyword id="KW-0411">Iron-sulfur</keyword>
<keyword id="KW-0479">Metal-binding</keyword>
<keyword id="KW-0500">Molybdenum</keyword>
<keyword id="KW-0534">Nitrate assimilation</keyword>
<keyword id="KW-0560">Oxidoreductase</keyword>
<organism>
    <name type="scientific">Klebsiella oxytoca</name>
    <dbReference type="NCBI Taxonomy" id="571"/>
    <lineage>
        <taxon>Bacteria</taxon>
        <taxon>Pseudomonadati</taxon>
        <taxon>Pseudomonadota</taxon>
        <taxon>Gammaproteobacteria</taxon>
        <taxon>Enterobacterales</taxon>
        <taxon>Enterobacteriaceae</taxon>
        <taxon>Klebsiella/Raoultella group</taxon>
        <taxon>Klebsiella</taxon>
    </lineage>
</organism>
<proteinExistence type="evidence at transcript level"/>
<evidence type="ECO:0000250" key="1"/>
<evidence type="ECO:0000255" key="2">
    <source>
        <dbReference type="PROSITE-ProRule" id="PRU01004"/>
    </source>
</evidence>
<evidence type="ECO:0000305" key="3"/>
<feature type="chain" id="PRO_0000063235" description="Nitrate reductase">
    <location>
        <begin position="1"/>
        <end position="866"/>
    </location>
</feature>
<feature type="domain" description="4Fe-4S Mo/W bis-MGD-type" evidence="2">
    <location>
        <begin position="1"/>
        <end position="57"/>
    </location>
</feature>
<feature type="binding site" evidence="2">
    <location>
        <position position="8"/>
    </location>
    <ligand>
        <name>[4Fe-4S] cluster</name>
        <dbReference type="ChEBI" id="CHEBI:49883"/>
    </ligand>
</feature>
<feature type="binding site" evidence="2">
    <location>
        <position position="11"/>
    </location>
    <ligand>
        <name>[4Fe-4S] cluster</name>
        <dbReference type="ChEBI" id="CHEBI:49883"/>
    </ligand>
</feature>
<feature type="binding site" evidence="2">
    <location>
        <position position="15"/>
    </location>
    <ligand>
        <name>[4Fe-4S] cluster</name>
        <dbReference type="ChEBI" id="CHEBI:49883"/>
    </ligand>
</feature>
<feature type="binding site" evidence="2">
    <location>
        <position position="43"/>
    </location>
    <ligand>
        <name>[4Fe-4S] cluster</name>
        <dbReference type="ChEBI" id="CHEBI:49883"/>
    </ligand>
</feature>
<name>NASA_KLEOX</name>
<accession>Q06457</accession>
<sequence length="866" mass="93897">MTETRTTCPYCGVGCGVIASRAPHGQVSVRGDEQHPANFGRLCVKGAALGETVGLEGRMLFPEVDGERATWPQALAAAGSRLREIIDRHGPQAVAFYASGQLLTEDYYAANKLMKGFIGAANIDTNSRLCMSSAVTGYKRALGADVVPCSYEDVENSDLVVLVGSNAAWAHPVLYQRLAQAKRDNPQMRVVVIDPRRTATCDIADRHLALAPGSDGGLFVGLLNAIAASGAISDDFNDAQRALTIAQDWDLDKVAQFCGLPRQQIADFYREFIAAPRAITLYTMGINQSASGSDKCNAIINVHLACGKYGRPGCGPFSLTGQPNAMGGREVGGLATMLAAHMNFEPDDLRRLARFWGSERLAQTPGLTGVELFAAIGRGEVKAVWIMGTNPVVSLPDSHAVSEALARCPLVIISDVVADTDTGRFAHIRFPALAWGEKSGTVTNSERRISRQRAFMPPPGEARADWWIVARVAEALGFGSAFAWQHPHEVFSEHAALSGYENDGQRAFDIGGLADLSREAWDALEPVRWPVSRSEAAWSVHKGWHRDGKLRMVPVAPQPTRATTDAFYPLILNSGRIRDQWHTMTRTGAVPRLMQHINEPVVEVAPADAQRYHLLEGELARVRSPKGVMVAKVTIGDGQRPGSLFVPMHWNNQFARQGRVNNLLAAVTDPHSGQPESKQTAVAIATWLPAWKGELFSRQPVPLPASLHWRRRAAQGIIHLSLAGDTRSRDWLVEWCQRQGWQMQVAEGGKVWNLLAWRAGELMLGWWSDASEPAIDADWIHAAFRVPPQNAARRHALLSGRKGGVEMPRGRIICSCFSVGERAIGEAIAGGCRTPGALGGKLKCGTNCGSCIPELKALLAAKLAQA</sequence>
<protein>
    <recommendedName>
        <fullName>Nitrate reductase</fullName>
        <ecNumber>1.7.-.-</ecNumber>
    </recommendedName>
</protein>
<dbReference type="EC" id="1.7.-.-"/>
<dbReference type="EMBL" id="L06800">
    <property type="protein sequence ID" value="AAA25100.2"/>
    <property type="molecule type" value="Genomic_DNA"/>
</dbReference>
<dbReference type="SMR" id="Q06457"/>
<dbReference type="STRING" id="571.AB185_18740"/>
<dbReference type="eggNOG" id="COG0243">
    <property type="taxonomic scope" value="Bacteria"/>
</dbReference>
<dbReference type="BioCyc" id="MetaCyc:MONOMER-13446"/>
<dbReference type="UniPathway" id="UPA00652">
    <property type="reaction ID" value="UER00706"/>
</dbReference>
<dbReference type="GO" id="GO:0016020">
    <property type="term" value="C:membrane"/>
    <property type="evidence" value="ECO:0007669"/>
    <property type="project" value="TreeGrafter"/>
</dbReference>
<dbReference type="GO" id="GO:1990204">
    <property type="term" value="C:oxidoreductase complex"/>
    <property type="evidence" value="ECO:0007669"/>
    <property type="project" value="UniProtKB-ARBA"/>
</dbReference>
<dbReference type="GO" id="GO:0051539">
    <property type="term" value="F:4 iron, 4 sulfur cluster binding"/>
    <property type="evidence" value="ECO:0007669"/>
    <property type="project" value="UniProtKB-KW"/>
</dbReference>
<dbReference type="GO" id="GO:0046872">
    <property type="term" value="F:metal ion binding"/>
    <property type="evidence" value="ECO:0007669"/>
    <property type="project" value="UniProtKB-KW"/>
</dbReference>
<dbReference type="GO" id="GO:0043546">
    <property type="term" value="F:molybdopterin cofactor binding"/>
    <property type="evidence" value="ECO:0007669"/>
    <property type="project" value="InterPro"/>
</dbReference>
<dbReference type="GO" id="GO:0016491">
    <property type="term" value="F:oxidoreductase activity"/>
    <property type="evidence" value="ECO:0007669"/>
    <property type="project" value="UniProtKB-KW"/>
</dbReference>
<dbReference type="GO" id="GO:0045333">
    <property type="term" value="P:cellular respiration"/>
    <property type="evidence" value="ECO:0007669"/>
    <property type="project" value="UniProtKB-ARBA"/>
</dbReference>
<dbReference type="GO" id="GO:0019333">
    <property type="term" value="P:denitrification pathway"/>
    <property type="evidence" value="ECO:0007669"/>
    <property type="project" value="UniProtKB-UniPathway"/>
</dbReference>
<dbReference type="GO" id="GO:0042128">
    <property type="term" value="P:nitrate assimilation"/>
    <property type="evidence" value="ECO:0007669"/>
    <property type="project" value="UniProtKB-KW"/>
</dbReference>
<dbReference type="CDD" id="cd02791">
    <property type="entry name" value="MopB_CT_Nitrate-R-NapA-like"/>
    <property type="match status" value="1"/>
</dbReference>
<dbReference type="CDD" id="cd02754">
    <property type="entry name" value="MopB_Nitrate-R-NapA-like"/>
    <property type="match status" value="1"/>
</dbReference>
<dbReference type="Gene3D" id="2.40.40.20">
    <property type="match status" value="1"/>
</dbReference>
<dbReference type="Gene3D" id="3.40.50.740">
    <property type="match status" value="1"/>
</dbReference>
<dbReference type="Gene3D" id="2.20.25.90">
    <property type="entry name" value="ADC-like domains"/>
    <property type="match status" value="1"/>
</dbReference>
<dbReference type="Gene3D" id="1.10.10.1100">
    <property type="entry name" value="BFD-like [2Fe-2S]-binding domain"/>
    <property type="match status" value="1"/>
</dbReference>
<dbReference type="Gene3D" id="3.40.228.10">
    <property type="entry name" value="Dimethylsulfoxide Reductase, domain 2"/>
    <property type="match status" value="1"/>
</dbReference>
<dbReference type="InterPro" id="IPR009010">
    <property type="entry name" value="Asp_de-COase-like_dom_sf"/>
</dbReference>
<dbReference type="InterPro" id="IPR007419">
    <property type="entry name" value="BFD-like_2Fe2S-bd_dom"/>
</dbReference>
<dbReference type="InterPro" id="IPR041854">
    <property type="entry name" value="BFD-like_2Fe2S-bd_dom_sf"/>
</dbReference>
<dbReference type="InterPro" id="IPR041957">
    <property type="entry name" value="CT_Nitrate-R-NapA-like"/>
</dbReference>
<dbReference type="InterPro" id="IPR006657">
    <property type="entry name" value="MoPterin_dinucl-bd_dom"/>
</dbReference>
<dbReference type="InterPro" id="IPR006656">
    <property type="entry name" value="Mopterin_OxRdtase"/>
</dbReference>
<dbReference type="InterPro" id="IPR006963">
    <property type="entry name" value="Mopterin_OxRdtase_4Fe-4S_dom"/>
</dbReference>
<dbReference type="InterPro" id="IPR027467">
    <property type="entry name" value="MopterinOxRdtase_cofactor_BS"/>
</dbReference>
<dbReference type="InterPro" id="IPR050123">
    <property type="entry name" value="Prok_molybdopt-oxidoreductase"/>
</dbReference>
<dbReference type="PANTHER" id="PTHR43105:SF9">
    <property type="entry name" value="NADPH-FE(3+) OXIDOREDUCTASE SUBUNIT ALPHA"/>
    <property type="match status" value="1"/>
</dbReference>
<dbReference type="PANTHER" id="PTHR43105">
    <property type="entry name" value="RESPIRATORY NITRATE REDUCTASE"/>
    <property type="match status" value="1"/>
</dbReference>
<dbReference type="Pfam" id="PF04324">
    <property type="entry name" value="Fer2_BFD"/>
    <property type="match status" value="1"/>
</dbReference>
<dbReference type="Pfam" id="PF04879">
    <property type="entry name" value="Molybdop_Fe4S4"/>
    <property type="match status" value="1"/>
</dbReference>
<dbReference type="Pfam" id="PF00384">
    <property type="entry name" value="Molybdopterin"/>
    <property type="match status" value="1"/>
</dbReference>
<dbReference type="Pfam" id="PF01568">
    <property type="entry name" value="Molydop_binding"/>
    <property type="match status" value="1"/>
</dbReference>
<dbReference type="SMART" id="SM00926">
    <property type="entry name" value="Molybdop_Fe4S4"/>
    <property type="match status" value="1"/>
</dbReference>
<dbReference type="SUPFAM" id="SSF50692">
    <property type="entry name" value="ADC-like"/>
    <property type="match status" value="1"/>
</dbReference>
<dbReference type="SUPFAM" id="SSF53706">
    <property type="entry name" value="Formate dehydrogenase/DMSO reductase, domains 1-3"/>
    <property type="match status" value="1"/>
</dbReference>
<dbReference type="PROSITE" id="PS51669">
    <property type="entry name" value="4FE4S_MOW_BIS_MGD"/>
    <property type="match status" value="1"/>
</dbReference>
<dbReference type="PROSITE" id="PS00551">
    <property type="entry name" value="MOLYBDOPTERIN_PROK_1"/>
    <property type="match status" value="1"/>
</dbReference>